<protein>
    <recommendedName>
        <fullName evidence="1">Elongation factor 4</fullName>
        <shortName evidence="1">EF-4</shortName>
        <ecNumber evidence="1">3.6.5.n1</ecNumber>
    </recommendedName>
    <alternativeName>
        <fullName evidence="1">Ribosomal back-translocase LepA</fullName>
    </alternativeName>
</protein>
<name>LEPA_PSET1</name>
<reference key="1">
    <citation type="journal article" date="2005" name="Genome Res.">
        <title>Coping with cold: the genome of the versatile marine Antarctica bacterium Pseudoalteromonas haloplanktis TAC125.</title>
        <authorList>
            <person name="Medigue C."/>
            <person name="Krin E."/>
            <person name="Pascal G."/>
            <person name="Barbe V."/>
            <person name="Bernsel A."/>
            <person name="Bertin P.N."/>
            <person name="Cheung F."/>
            <person name="Cruveiller S."/>
            <person name="D'Amico S."/>
            <person name="Duilio A."/>
            <person name="Fang G."/>
            <person name="Feller G."/>
            <person name="Ho C."/>
            <person name="Mangenot S."/>
            <person name="Marino G."/>
            <person name="Nilsson J."/>
            <person name="Parrilli E."/>
            <person name="Rocha E.P.C."/>
            <person name="Rouy Z."/>
            <person name="Sekowska A."/>
            <person name="Tutino M.L."/>
            <person name="Vallenet D."/>
            <person name="von Heijne G."/>
            <person name="Danchin A."/>
        </authorList>
    </citation>
    <scope>NUCLEOTIDE SEQUENCE [LARGE SCALE GENOMIC DNA]</scope>
    <source>
        <strain>TAC 125</strain>
    </source>
</reference>
<feature type="chain" id="PRO_0000224783" description="Elongation factor 4">
    <location>
        <begin position="1"/>
        <end position="596"/>
    </location>
</feature>
<feature type="domain" description="tr-type G">
    <location>
        <begin position="2"/>
        <end position="184"/>
    </location>
</feature>
<feature type="binding site" evidence="1">
    <location>
        <begin position="14"/>
        <end position="19"/>
    </location>
    <ligand>
        <name>GTP</name>
        <dbReference type="ChEBI" id="CHEBI:37565"/>
    </ligand>
</feature>
<feature type="binding site" evidence="1">
    <location>
        <begin position="131"/>
        <end position="134"/>
    </location>
    <ligand>
        <name>GTP</name>
        <dbReference type="ChEBI" id="CHEBI:37565"/>
    </ligand>
</feature>
<comment type="function">
    <text evidence="1">Required for accurate and efficient protein synthesis under certain stress conditions. May act as a fidelity factor of the translation reaction, by catalyzing a one-codon backward translocation of tRNAs on improperly translocated ribosomes. Back-translocation proceeds from a post-translocation (POST) complex to a pre-translocation (PRE) complex, thus giving elongation factor G a second chance to translocate the tRNAs correctly. Binds to ribosomes in a GTP-dependent manner.</text>
</comment>
<comment type="catalytic activity">
    <reaction evidence="1">
        <text>GTP + H2O = GDP + phosphate + H(+)</text>
        <dbReference type="Rhea" id="RHEA:19669"/>
        <dbReference type="ChEBI" id="CHEBI:15377"/>
        <dbReference type="ChEBI" id="CHEBI:15378"/>
        <dbReference type="ChEBI" id="CHEBI:37565"/>
        <dbReference type="ChEBI" id="CHEBI:43474"/>
        <dbReference type="ChEBI" id="CHEBI:58189"/>
        <dbReference type="EC" id="3.6.5.n1"/>
    </reaction>
</comment>
<comment type="subcellular location">
    <subcellularLocation>
        <location evidence="1">Cell inner membrane</location>
        <topology evidence="1">Peripheral membrane protein</topology>
        <orientation evidence="1">Cytoplasmic side</orientation>
    </subcellularLocation>
</comment>
<comment type="similarity">
    <text evidence="1">Belongs to the TRAFAC class translation factor GTPase superfamily. Classic translation factor GTPase family. LepA subfamily.</text>
</comment>
<gene>
    <name evidence="1" type="primary">lepA</name>
    <name type="ordered locus">PSHAa0730</name>
</gene>
<accession>Q3IDL4</accession>
<keyword id="KW-0997">Cell inner membrane</keyword>
<keyword id="KW-1003">Cell membrane</keyword>
<keyword id="KW-0342">GTP-binding</keyword>
<keyword id="KW-0378">Hydrolase</keyword>
<keyword id="KW-0472">Membrane</keyword>
<keyword id="KW-0547">Nucleotide-binding</keyword>
<keyword id="KW-0648">Protein biosynthesis</keyword>
<keyword id="KW-1185">Reference proteome</keyword>
<dbReference type="EC" id="3.6.5.n1" evidence="1"/>
<dbReference type="EMBL" id="CR954246">
    <property type="protein sequence ID" value="CAI85813.1"/>
    <property type="molecule type" value="Genomic_DNA"/>
</dbReference>
<dbReference type="SMR" id="Q3IDL4"/>
<dbReference type="STRING" id="326442.PSHAa0730"/>
<dbReference type="KEGG" id="pha:PSHAa0730"/>
<dbReference type="PATRIC" id="fig|326442.8.peg.693"/>
<dbReference type="eggNOG" id="COG0481">
    <property type="taxonomic scope" value="Bacteria"/>
</dbReference>
<dbReference type="HOGENOM" id="CLU_009995_3_3_6"/>
<dbReference type="BioCyc" id="PHAL326442:PSHA_RS03565-MONOMER"/>
<dbReference type="Proteomes" id="UP000006843">
    <property type="component" value="Chromosome I"/>
</dbReference>
<dbReference type="GO" id="GO:0005886">
    <property type="term" value="C:plasma membrane"/>
    <property type="evidence" value="ECO:0007669"/>
    <property type="project" value="UniProtKB-SubCell"/>
</dbReference>
<dbReference type="GO" id="GO:0005525">
    <property type="term" value="F:GTP binding"/>
    <property type="evidence" value="ECO:0007669"/>
    <property type="project" value="UniProtKB-UniRule"/>
</dbReference>
<dbReference type="GO" id="GO:0003924">
    <property type="term" value="F:GTPase activity"/>
    <property type="evidence" value="ECO:0007669"/>
    <property type="project" value="UniProtKB-UniRule"/>
</dbReference>
<dbReference type="GO" id="GO:0097216">
    <property type="term" value="F:guanosine tetraphosphate binding"/>
    <property type="evidence" value="ECO:0007669"/>
    <property type="project" value="UniProtKB-ARBA"/>
</dbReference>
<dbReference type="GO" id="GO:0043022">
    <property type="term" value="F:ribosome binding"/>
    <property type="evidence" value="ECO:0007669"/>
    <property type="project" value="UniProtKB-UniRule"/>
</dbReference>
<dbReference type="GO" id="GO:0003746">
    <property type="term" value="F:translation elongation factor activity"/>
    <property type="evidence" value="ECO:0007669"/>
    <property type="project" value="UniProtKB-UniRule"/>
</dbReference>
<dbReference type="GO" id="GO:0045727">
    <property type="term" value="P:positive regulation of translation"/>
    <property type="evidence" value="ECO:0007669"/>
    <property type="project" value="UniProtKB-UniRule"/>
</dbReference>
<dbReference type="CDD" id="cd03699">
    <property type="entry name" value="EF4_II"/>
    <property type="match status" value="1"/>
</dbReference>
<dbReference type="CDD" id="cd16260">
    <property type="entry name" value="EF4_III"/>
    <property type="match status" value="1"/>
</dbReference>
<dbReference type="CDD" id="cd01890">
    <property type="entry name" value="LepA"/>
    <property type="match status" value="1"/>
</dbReference>
<dbReference type="CDD" id="cd03709">
    <property type="entry name" value="lepA_C"/>
    <property type="match status" value="1"/>
</dbReference>
<dbReference type="FunFam" id="3.40.50.300:FF:000078">
    <property type="entry name" value="Elongation factor 4"/>
    <property type="match status" value="1"/>
</dbReference>
<dbReference type="FunFam" id="2.40.30.10:FF:000015">
    <property type="entry name" value="Translation factor GUF1, mitochondrial"/>
    <property type="match status" value="1"/>
</dbReference>
<dbReference type="FunFam" id="3.30.70.240:FF:000007">
    <property type="entry name" value="Translation factor GUF1, mitochondrial"/>
    <property type="match status" value="1"/>
</dbReference>
<dbReference type="FunFam" id="3.30.70.2570:FF:000001">
    <property type="entry name" value="Translation factor GUF1, mitochondrial"/>
    <property type="match status" value="1"/>
</dbReference>
<dbReference type="FunFam" id="3.30.70.870:FF:000004">
    <property type="entry name" value="Translation factor GUF1, mitochondrial"/>
    <property type="match status" value="1"/>
</dbReference>
<dbReference type="Gene3D" id="3.30.70.240">
    <property type="match status" value="1"/>
</dbReference>
<dbReference type="Gene3D" id="3.30.70.2570">
    <property type="entry name" value="Elongation factor 4, C-terminal domain"/>
    <property type="match status" value="1"/>
</dbReference>
<dbReference type="Gene3D" id="3.30.70.870">
    <property type="entry name" value="Elongation Factor G (Translational Gtpase), domain 3"/>
    <property type="match status" value="1"/>
</dbReference>
<dbReference type="Gene3D" id="3.40.50.300">
    <property type="entry name" value="P-loop containing nucleotide triphosphate hydrolases"/>
    <property type="match status" value="1"/>
</dbReference>
<dbReference type="Gene3D" id="2.40.30.10">
    <property type="entry name" value="Translation factors"/>
    <property type="match status" value="1"/>
</dbReference>
<dbReference type="HAMAP" id="MF_00071">
    <property type="entry name" value="LepA"/>
    <property type="match status" value="1"/>
</dbReference>
<dbReference type="InterPro" id="IPR006297">
    <property type="entry name" value="EF-4"/>
</dbReference>
<dbReference type="InterPro" id="IPR035647">
    <property type="entry name" value="EFG_III/V"/>
</dbReference>
<dbReference type="InterPro" id="IPR000640">
    <property type="entry name" value="EFG_V-like"/>
</dbReference>
<dbReference type="InterPro" id="IPR004161">
    <property type="entry name" value="EFTu-like_2"/>
</dbReference>
<dbReference type="InterPro" id="IPR031157">
    <property type="entry name" value="G_TR_CS"/>
</dbReference>
<dbReference type="InterPro" id="IPR038363">
    <property type="entry name" value="LepA_C_sf"/>
</dbReference>
<dbReference type="InterPro" id="IPR013842">
    <property type="entry name" value="LepA_CTD"/>
</dbReference>
<dbReference type="InterPro" id="IPR035654">
    <property type="entry name" value="LepA_IV"/>
</dbReference>
<dbReference type="InterPro" id="IPR027417">
    <property type="entry name" value="P-loop_NTPase"/>
</dbReference>
<dbReference type="InterPro" id="IPR005225">
    <property type="entry name" value="Small_GTP-bd"/>
</dbReference>
<dbReference type="InterPro" id="IPR000795">
    <property type="entry name" value="T_Tr_GTP-bd_dom"/>
</dbReference>
<dbReference type="InterPro" id="IPR009000">
    <property type="entry name" value="Transl_B-barrel_sf"/>
</dbReference>
<dbReference type="NCBIfam" id="TIGR01393">
    <property type="entry name" value="lepA"/>
    <property type="match status" value="1"/>
</dbReference>
<dbReference type="NCBIfam" id="TIGR00231">
    <property type="entry name" value="small_GTP"/>
    <property type="match status" value="1"/>
</dbReference>
<dbReference type="PANTHER" id="PTHR43512:SF4">
    <property type="entry name" value="TRANSLATION FACTOR GUF1 HOMOLOG, CHLOROPLASTIC"/>
    <property type="match status" value="1"/>
</dbReference>
<dbReference type="PANTHER" id="PTHR43512">
    <property type="entry name" value="TRANSLATION FACTOR GUF1-RELATED"/>
    <property type="match status" value="1"/>
</dbReference>
<dbReference type="Pfam" id="PF00679">
    <property type="entry name" value="EFG_C"/>
    <property type="match status" value="1"/>
</dbReference>
<dbReference type="Pfam" id="PF00009">
    <property type="entry name" value="GTP_EFTU"/>
    <property type="match status" value="1"/>
</dbReference>
<dbReference type="Pfam" id="PF03144">
    <property type="entry name" value="GTP_EFTU_D2"/>
    <property type="match status" value="1"/>
</dbReference>
<dbReference type="Pfam" id="PF06421">
    <property type="entry name" value="LepA_C"/>
    <property type="match status" value="1"/>
</dbReference>
<dbReference type="PRINTS" id="PR00315">
    <property type="entry name" value="ELONGATNFCT"/>
</dbReference>
<dbReference type="SUPFAM" id="SSF54980">
    <property type="entry name" value="EF-G C-terminal domain-like"/>
    <property type="match status" value="2"/>
</dbReference>
<dbReference type="SUPFAM" id="SSF52540">
    <property type="entry name" value="P-loop containing nucleoside triphosphate hydrolases"/>
    <property type="match status" value="1"/>
</dbReference>
<dbReference type="SUPFAM" id="SSF50447">
    <property type="entry name" value="Translation proteins"/>
    <property type="match status" value="1"/>
</dbReference>
<dbReference type="PROSITE" id="PS00301">
    <property type="entry name" value="G_TR_1"/>
    <property type="match status" value="1"/>
</dbReference>
<dbReference type="PROSITE" id="PS51722">
    <property type="entry name" value="G_TR_2"/>
    <property type="match status" value="1"/>
</dbReference>
<proteinExistence type="inferred from homology"/>
<organism>
    <name type="scientific">Pseudoalteromonas translucida (strain TAC 125)</name>
    <dbReference type="NCBI Taxonomy" id="326442"/>
    <lineage>
        <taxon>Bacteria</taxon>
        <taxon>Pseudomonadati</taxon>
        <taxon>Pseudomonadota</taxon>
        <taxon>Gammaproteobacteria</taxon>
        <taxon>Alteromonadales</taxon>
        <taxon>Pseudoalteromonadaceae</taxon>
        <taxon>Pseudoalteromonas</taxon>
    </lineage>
</organism>
<evidence type="ECO:0000255" key="1">
    <source>
        <dbReference type="HAMAP-Rule" id="MF_00071"/>
    </source>
</evidence>
<sequence length="596" mass="66000">MKHIRNFSIIAHIDHGKSTLSDRLIQVCGGLTDREMQKQVLDSMDIERERGITIKAQSVTLNYKANDGEIYQLNFIDTPGHVDFTYEVSRSLAACEGALLVVDAGQGVEAQTLANCYTAIEMNLEVIPVLNKIDLPQADPLRVAEEIEDIIGIDALDAVQCSAKTGVGIAEVLEMIVKDVPPPVGDKDAPLQALIIDSWFDPYQGVVSLVRIKHGELRAGDKIKIMSNDHVHTADQVGVFTPKQTNTGILRTGEVGFVIAGIKEIHGAPVGDTITHQKNAAPLRLPGFQKIKPQVYAGMFPIASDEYESFRDALNKLSLNDASLFFEPENSTALGFGFRCGFLGMLHMEIIQERLEREYDIDLITTAPTVIYEVVTKKDGTFQIDNPSDLPAVNDILEIREPIVEANILVPQEYLGSVITLCVDKRGMQTKMSYHGKQVAVTYELPMAEVVMDFFDKLKSTSRGFASLDYNFKHFQTSDMVRVDILINSERVDALAIIAHRDSAQSRGRQLADALKELIPRQMFDIAIQAAIGGHVIARTTIKQMRKNVIAKCYGGDVSRKKKLLKKQKDGKKRMKQVGNVEVPQEAFLAILKVGK</sequence>